<comment type="similarity">
    <text evidence="2">To E.coli GltF.</text>
</comment>
<accession>P45422</accession>
<accession>Q2M8Z4</accession>
<gene>
    <name type="primary">yhcF</name>
    <name type="ordered locus">b3219</name>
    <name type="ordered locus">JW3188</name>
</gene>
<evidence type="ECO:0000255" key="1"/>
<evidence type="ECO:0000305" key="2"/>
<proteinExistence type="inferred from homology"/>
<protein>
    <recommendedName>
        <fullName>Uncharacterized protein YhcF</fullName>
    </recommendedName>
</protein>
<feature type="signal peptide" evidence="1">
    <location>
        <begin position="1"/>
        <end position="20"/>
    </location>
</feature>
<feature type="chain" id="PRO_0000013920" description="Uncharacterized protein YhcF">
    <location>
        <begin position="21"/>
        <end position="238"/>
    </location>
</feature>
<keyword id="KW-1185">Reference proteome</keyword>
<keyword id="KW-0732">Signal</keyword>
<name>YHCF_ECOLI</name>
<sequence>MNNVKLLIAGSAFFAMSAQAADRVSIDVKVTLEAAACTPILSNGGVVNFGSHSVNRLSTQHYTQIGTRNINMTITCESATGIAITARDTRMDSMTTGKDSGGQSGVKYTLNGGGYISQTTRLFGLGKTKDNKNIGSYAVLIDSNNISASNGSQTLAVSIAGADAVITGQKRAWQTLTAYPLAVDQSYYYTFVKPGETTPTPVTNAIIPLQVSASIANDLGGSEKIELDGKAVISVVYL</sequence>
<dbReference type="EMBL" id="U18997">
    <property type="protein sequence ID" value="AAA58021.1"/>
    <property type="molecule type" value="Genomic_DNA"/>
</dbReference>
<dbReference type="EMBL" id="U00096">
    <property type="protein sequence ID" value="AAC76251.1"/>
    <property type="molecule type" value="Genomic_DNA"/>
</dbReference>
<dbReference type="EMBL" id="AP009048">
    <property type="protein sequence ID" value="BAE77262.1"/>
    <property type="molecule type" value="Genomic_DNA"/>
</dbReference>
<dbReference type="PIR" id="E65113">
    <property type="entry name" value="E65113"/>
</dbReference>
<dbReference type="RefSeq" id="NP_417686.1">
    <property type="nucleotide sequence ID" value="NC_000913.3"/>
</dbReference>
<dbReference type="RefSeq" id="WP_001067008.1">
    <property type="nucleotide sequence ID" value="NZ_SSZK01000007.1"/>
</dbReference>
<dbReference type="BioGRID" id="4262057">
    <property type="interactions" value="14"/>
</dbReference>
<dbReference type="BioGRID" id="852048">
    <property type="interactions" value="2"/>
</dbReference>
<dbReference type="FunCoup" id="P45422">
    <property type="interactions" value="4"/>
</dbReference>
<dbReference type="IntAct" id="P45422">
    <property type="interactions" value="2"/>
</dbReference>
<dbReference type="STRING" id="511145.b3219"/>
<dbReference type="PaxDb" id="511145-b3219"/>
<dbReference type="EnsemblBacteria" id="AAC76251">
    <property type="protein sequence ID" value="AAC76251"/>
    <property type="gene ID" value="b3219"/>
</dbReference>
<dbReference type="GeneID" id="947735"/>
<dbReference type="KEGG" id="ecj:JW3188"/>
<dbReference type="KEGG" id="eco:b3219"/>
<dbReference type="KEGG" id="ecoc:C3026_17515"/>
<dbReference type="PATRIC" id="fig|1411691.4.peg.3509"/>
<dbReference type="EchoBASE" id="EB2663"/>
<dbReference type="eggNOG" id="COG3539">
    <property type="taxonomic scope" value="Bacteria"/>
</dbReference>
<dbReference type="HOGENOM" id="CLU_093407_0_0_6"/>
<dbReference type="InParanoid" id="P45422"/>
<dbReference type="OMA" id="TISCDAP"/>
<dbReference type="OrthoDB" id="6602763at2"/>
<dbReference type="PhylomeDB" id="P45422"/>
<dbReference type="BioCyc" id="EcoCyc:G7673-MONOMER"/>
<dbReference type="PRO" id="PR:P45422"/>
<dbReference type="Proteomes" id="UP000000625">
    <property type="component" value="Chromosome"/>
</dbReference>
<dbReference type="GO" id="GO:0006974">
    <property type="term" value="P:DNA damage response"/>
    <property type="evidence" value="ECO:0000270"/>
    <property type="project" value="EcoliWiki"/>
</dbReference>
<dbReference type="InterPro" id="IPR010546">
    <property type="entry name" value="DUF1120"/>
</dbReference>
<dbReference type="Pfam" id="PF06551">
    <property type="entry name" value="DUF1120"/>
    <property type="match status" value="1"/>
</dbReference>
<organism>
    <name type="scientific">Escherichia coli (strain K12)</name>
    <dbReference type="NCBI Taxonomy" id="83333"/>
    <lineage>
        <taxon>Bacteria</taxon>
        <taxon>Pseudomonadati</taxon>
        <taxon>Pseudomonadota</taxon>
        <taxon>Gammaproteobacteria</taxon>
        <taxon>Enterobacterales</taxon>
        <taxon>Enterobacteriaceae</taxon>
        <taxon>Escherichia</taxon>
    </lineage>
</organism>
<reference key="1">
    <citation type="journal article" date="1997" name="Science">
        <title>The complete genome sequence of Escherichia coli K-12.</title>
        <authorList>
            <person name="Blattner F.R."/>
            <person name="Plunkett G. III"/>
            <person name="Bloch C.A."/>
            <person name="Perna N.T."/>
            <person name="Burland V."/>
            <person name="Riley M."/>
            <person name="Collado-Vides J."/>
            <person name="Glasner J.D."/>
            <person name="Rode C.K."/>
            <person name="Mayhew G.F."/>
            <person name="Gregor J."/>
            <person name="Davis N.W."/>
            <person name="Kirkpatrick H.A."/>
            <person name="Goeden M.A."/>
            <person name="Rose D.J."/>
            <person name="Mau B."/>
            <person name="Shao Y."/>
        </authorList>
    </citation>
    <scope>NUCLEOTIDE SEQUENCE [LARGE SCALE GENOMIC DNA]</scope>
    <source>
        <strain>K12 / MG1655 / ATCC 47076</strain>
    </source>
</reference>
<reference key="2">
    <citation type="journal article" date="2006" name="Mol. Syst. Biol.">
        <title>Highly accurate genome sequences of Escherichia coli K-12 strains MG1655 and W3110.</title>
        <authorList>
            <person name="Hayashi K."/>
            <person name="Morooka N."/>
            <person name="Yamamoto Y."/>
            <person name="Fujita K."/>
            <person name="Isono K."/>
            <person name="Choi S."/>
            <person name="Ohtsubo E."/>
            <person name="Baba T."/>
            <person name="Wanner B.L."/>
            <person name="Mori H."/>
            <person name="Horiuchi T."/>
        </authorList>
    </citation>
    <scope>NUCLEOTIDE SEQUENCE [LARGE SCALE GENOMIC DNA]</scope>
    <source>
        <strain>K12 / W3110 / ATCC 27325 / DSM 5911</strain>
    </source>
</reference>